<proteinExistence type="evidence at protein level"/>
<accession>A0A646QV53</accession>
<keyword id="KW-0002">3D-structure</keyword>
<keyword id="KW-0903">Direct protein sequencing</keyword>
<keyword id="KW-0348">Hemagglutinin</keyword>
<keyword id="KW-0430">Lectin</keyword>
<name>LECS1_MYTVI</name>
<evidence type="ECO:0000269" key="1">
    <source>
    </source>
</evidence>
<evidence type="ECO:0000269" key="2">
    <source>
    </source>
</evidence>
<evidence type="ECO:0000303" key="3">
    <source>
    </source>
</evidence>
<evidence type="ECO:0000303" key="4">
    <source>
    </source>
</evidence>
<evidence type="ECO:0000305" key="5">
    <source>
    </source>
</evidence>
<evidence type="ECO:0000305" key="6">
    <source>
    </source>
</evidence>
<evidence type="ECO:0000312" key="7">
    <source>
        <dbReference type="EMBL" id="QBM06340.1"/>
    </source>
</evidence>
<evidence type="ECO:0000312" key="8">
    <source>
        <dbReference type="PDB" id="6LF1"/>
    </source>
</evidence>
<evidence type="ECO:0000312" key="9">
    <source>
        <dbReference type="PDB" id="6LF2"/>
    </source>
</evidence>
<evidence type="ECO:0007744" key="10">
    <source>
        <dbReference type="PDB" id="6LF2"/>
    </source>
</evidence>
<evidence type="ECO:0007829" key="11">
    <source>
        <dbReference type="PDB" id="6LF2"/>
    </source>
</evidence>
<protein>
    <recommendedName>
        <fullName evidence="3 4">GM1b/asialo-GM1 oligosaccharide-binding R-type lectin</fullName>
    </recommendedName>
    <alternativeName>
        <fullName evidence="7">R-type lectin 1</fullName>
    </alternativeName>
    <alternativeName>
        <fullName evidence="3 4">SeviL</fullName>
    </alternativeName>
    <alternativeName>
        <fullName evidence="3">SeviL-1</fullName>
    </alternativeName>
</protein>
<sequence>MSSVTIGKCYIQNRENGGRAFYNLGRKDLGIFTGKMYDDQIWSFQKSDTPGYYTIGRESKFLQYNGEQVIMSDIEQDTTLWSLEEVPEDKGFYRLLNKVHKAYLDYNGGDLVANKHQTESEKWILFKAY</sequence>
<organism>
    <name type="scientific">Mytilisepta virgata</name>
    <name type="common">Purplish bifurcate mussel</name>
    <name type="synonym">Tichogonia virgata</name>
    <dbReference type="NCBI Taxonomy" id="2547956"/>
    <lineage>
        <taxon>Eukaryota</taxon>
        <taxon>Metazoa</taxon>
        <taxon>Spiralia</taxon>
        <taxon>Lophotrochozoa</taxon>
        <taxon>Mollusca</taxon>
        <taxon>Bivalvia</taxon>
        <taxon>Autobranchia</taxon>
        <taxon>Pteriomorphia</taxon>
        <taxon>Mytilida</taxon>
        <taxon>Mytiloidea</taxon>
        <taxon>Mytilidae</taxon>
        <taxon>Brachidontinae</taxon>
        <taxon>Mytilisepta</taxon>
    </lineage>
</organism>
<comment type="function">
    <text evidence="1 2">Galbeta1-3GalNAcbeta1-4Galbeta1-4Glc oligosaccharide-binding lectin. Binds strongly to the oligosaccharides of ganglioside GM1b and to a lesser extent its precursor asialo-GM1 (PubMed:31769916, PubMed:33328520). Binds weakly to asialo-GM2 oligosaccharide and to the glycan moiety of globo-series stage-specific embryonal antigen 4 (SSEA-4) hexaose (PubMed:31769916). Binds galactose, N-acetylgalactose and lactose. Does not bind GM1 (PubMed:33328520). Does not bind to Gal-beta1,3-GalNAc (Thomsen-Friedenreich antigen), the oligosaccharide of GM1a ganglioside or SSEA-4 tetraose. Does not bind to N-glycans, O-glycans or glycosaminoglycans of glycoproteins. Does not bind Lewis glycans, derivatives of lactose or N-acetyllactosamine or blood group (ABH-type) oligosaccharides (PubMed:31769916). Does not bind glucose (PubMed:33328520). Has hemagglutination activity towards rabbit erythrocytes (PubMed:31769916, PubMed:33328520). Displays cytotoxic effects against various cultured cell lines including human breast (MCF-7), cervical (HeLa) and colon cancer (Caco2) cell lines, as well as dog kidney (MDCK) cell line that express asialo-GM1 oligosaccharide at their cell surface. Shows dose- and time-dependent activation of MKK3/6, ERK1/2 and p38 MAPK, as well as caspase-3/9 in HeLa cervical cancer cells. No cytotoxic effect on BT474 human breast cancer cell line. May be involved in recognition of glycans found on parasitic or symbiotic microorganisms (PubMed:31769916).</text>
</comment>
<comment type="activity regulation">
    <text evidence="1 2">Hemagglutination activity requires divalent cations such as Ca(2+) (PubMed:31769916, PubMed:33328520). Hemagglutination activity is weakly inhibited by monosaccharides such as D-Gal (25 mM), D-GalNAc (25 mM) and D-Fuc (25 mM) and by disaccharides such as melibiose (25 mM) and lactose (25 mM). Hemagglutination activity is inhibited by bovine submaxillary mucin, but not by porcine stomach mucin or fetuin (PubMed:31769916).</text>
</comment>
<comment type="subunit">
    <text evidence="1 2">Homodimer.</text>
</comment>
<comment type="tissue specificity">
    <text evidence="1">Highest expression in the outer part of the mantle rim. Highly expressed in gills, with a much lower expression in the digestive gland and posterior adductor muscle. Scarcely detectable in foot.</text>
</comment>
<comment type="biotechnology">
    <text evidence="5 6">This protein has potential for the detection and control of certain cancer cells and cells of the immune system, that display asialo-GM1 (PubMed:33328520). Has potential clinical applications since it recognizes glycans expressed specifically by the target antigen for Guillain-Barre syndrome (GM1b), natural killer (NK) cells and basophils (asialo-GM1) and glioblastoma multiforme (SSEA-4) in vertebrates (PubMed:31769916).</text>
</comment>
<dbReference type="EMBL" id="MK434191">
    <property type="protein sequence ID" value="QBM06340.1"/>
    <property type="molecule type" value="mRNA"/>
</dbReference>
<dbReference type="PDB" id="6LF1">
    <property type="method" value="X-ray"/>
    <property type="resolution" value="1.70 A"/>
    <property type="chains" value="A/B=1-129"/>
</dbReference>
<dbReference type="PDB" id="6LF2">
    <property type="method" value="X-ray"/>
    <property type="resolution" value="1.60 A"/>
    <property type="chains" value="A/B=1-129"/>
</dbReference>
<dbReference type="PDBsum" id="6LF1"/>
<dbReference type="PDBsum" id="6LF2"/>
<dbReference type="SMR" id="A0A646QV53"/>
<dbReference type="UniLectin" id="A0A646QV53"/>
<dbReference type="GO" id="GO:0030246">
    <property type="term" value="F:carbohydrate binding"/>
    <property type="evidence" value="ECO:0007669"/>
    <property type="project" value="UniProtKB-KW"/>
</dbReference>
<dbReference type="CDD" id="cd23717">
    <property type="entry name" value="beta-trefoil_Ricin_SeviL"/>
    <property type="match status" value="1"/>
</dbReference>
<dbReference type="Gene3D" id="2.80.10.50">
    <property type="match status" value="1"/>
</dbReference>
<dbReference type="InterPro" id="IPR035992">
    <property type="entry name" value="Ricin_B-like_lectins"/>
</dbReference>
<dbReference type="SUPFAM" id="SSF50370">
    <property type="entry name" value="Ricin B-like lectins"/>
    <property type="match status" value="1"/>
</dbReference>
<reference evidence="7" key="1">
    <citation type="journal article" date="2019" name="FEBS J.">
        <title>A GM1b/asialo-GM1 oligosaccharide-binding R-type lectin from purplish bifurcate mussels Mytilisepta virgata and its effect on MAP kinases.</title>
        <authorList>
            <person name="Fujii Y."/>
            <person name="Gerdol M."/>
            <person name="Kawsar S.M.A."/>
            <person name="Hasan I."/>
            <person name="Spazzali F."/>
            <person name="Yoshida T."/>
            <person name="Ogawa Y."/>
            <person name="Rajia S."/>
            <person name="Kamata K."/>
            <person name="Koide Y."/>
            <person name="Sugawara S."/>
            <person name="Hosono M."/>
            <person name="Tame J.R.H."/>
            <person name="Fujita H."/>
            <person name="Pallavicini A."/>
            <person name="Ozeki Y."/>
        </authorList>
    </citation>
    <scope>NUCLEOTIDE SEQUENCE [MRNA]</scope>
    <scope>PROTEIN SEQUENCE OF 104-115</scope>
    <scope>FUNCTION</scope>
    <scope>ACTIVITY REGULATION</scope>
    <scope>SUBUNIT</scope>
    <scope>TISSUE SPECIFICITY</scope>
    <scope>BIOTECHNOLOGY</scope>
    <scope>3D-STRUCTURE MODELING</scope>
</reference>
<reference evidence="8 9" key="2">
    <citation type="journal article" date="2020" name="Sci. Rep.">
        <title>The structure of SeviL, a GM1b/asialo-GM1 binding R-type lectin from the mussel Mytilisepta virgata.</title>
        <authorList>
            <person name="Kamata K."/>
            <person name="Mizutani K."/>
            <person name="Takahashi K."/>
            <person name="Marchetti R."/>
            <person name="Silipo A."/>
            <person name="Addy C."/>
            <person name="Park S.Y."/>
            <person name="Fujii Y."/>
            <person name="Fujita H."/>
            <person name="Konuma T."/>
            <person name="Ikegami T."/>
            <person name="Ozeki Y."/>
            <person name="Tame J.R.H."/>
        </authorList>
    </citation>
    <scope>X-RAY CRYSTALLOGRAPHY (1.60 ANGSTROMS) AND IN COMPLEX WITH OLIGOSACCHARIDE OF ASIALO-GM1</scope>
    <scope>FUNCTION</scope>
    <scope>ACTIVITY REGULATION</scope>
    <scope>SUBUNIT</scope>
    <scope>BIOTECHNOLOGY</scope>
    <scope>MUTAGENESIS OF GLN-12; ASP-39 AND PHE-126</scope>
</reference>
<feature type="chain" id="PRO_0000453280" description="GM1b/asialo-GM1 oligosaccharide-binding R-type lectin">
    <location>
        <begin position="1"/>
        <end position="129"/>
    </location>
</feature>
<feature type="binding site" evidence="2 10">
    <location>
        <begin position="21"/>
        <end position="23"/>
    </location>
    <ligand>
        <name>a carbohydrate</name>
        <dbReference type="ChEBI" id="CHEBI:16646"/>
    </ligand>
</feature>
<feature type="binding site" evidence="2 10">
    <location>
        <begin position="26"/>
        <end position="28"/>
    </location>
    <ligand>
        <name>a carbohydrate</name>
        <dbReference type="ChEBI" id="CHEBI:16646"/>
    </ligand>
</feature>
<feature type="binding site" evidence="2 10">
    <location>
        <position position="32"/>
    </location>
    <ligand>
        <name>a carbohydrate</name>
        <dbReference type="ChEBI" id="CHEBI:16646"/>
    </ligand>
</feature>
<feature type="binding site" evidence="2 10">
    <location>
        <begin position="37"/>
        <end position="40"/>
    </location>
    <ligand>
        <name>a carbohydrate</name>
        <dbReference type="ChEBI" id="CHEBI:16646"/>
    </ligand>
</feature>
<feature type="mutagenesis site" description="Loss of hemagglutination. Loss of homodimerization, but retains saccharide binding; when associated with K-126." evidence="2">
    <original>Q</original>
    <variation>R</variation>
    <location>
        <position position="12"/>
    </location>
</feature>
<feature type="mutagenesis site" description="Loss of hemagglutination." evidence="2">
    <original>D</original>
    <variation>H</variation>
    <location>
        <position position="39"/>
    </location>
</feature>
<feature type="mutagenesis site" description="Loss of hemagglutination. Loss of homodimerization, but retains saccharide binding; when associated with R-12." evidence="2">
    <original>F</original>
    <variation>K</variation>
    <location>
        <position position="126"/>
    </location>
</feature>
<feature type="strand" evidence="11">
    <location>
        <begin position="7"/>
        <end position="13"/>
    </location>
</feature>
<feature type="turn" evidence="11">
    <location>
        <begin position="14"/>
        <end position="16"/>
    </location>
</feature>
<feature type="strand" evidence="11">
    <location>
        <begin position="19"/>
        <end position="23"/>
    </location>
</feature>
<feature type="turn" evidence="11">
    <location>
        <begin position="24"/>
        <end position="27"/>
    </location>
</feature>
<feature type="strand" evidence="11">
    <location>
        <begin position="28"/>
        <end position="32"/>
    </location>
</feature>
<feature type="helix" evidence="11">
    <location>
        <begin position="38"/>
        <end position="40"/>
    </location>
</feature>
<feature type="strand" evidence="11">
    <location>
        <begin position="42"/>
        <end position="46"/>
    </location>
</feature>
<feature type="strand" evidence="11">
    <location>
        <begin position="53"/>
        <end position="57"/>
    </location>
</feature>
<feature type="strand" evidence="11">
    <location>
        <begin position="60"/>
        <end position="64"/>
    </location>
</feature>
<feature type="strand" evidence="11">
    <location>
        <begin position="69"/>
        <end position="74"/>
    </location>
</feature>
<feature type="helix" evidence="11">
    <location>
        <begin position="77"/>
        <end position="79"/>
    </location>
</feature>
<feature type="strand" evidence="11">
    <location>
        <begin position="81"/>
        <end position="85"/>
    </location>
</feature>
<feature type="strand" evidence="11">
    <location>
        <begin position="93"/>
        <end position="97"/>
    </location>
</feature>
<feature type="turn" evidence="11">
    <location>
        <begin position="98"/>
        <end position="100"/>
    </location>
</feature>
<feature type="strand" evidence="11">
    <location>
        <begin position="103"/>
        <end position="107"/>
    </location>
</feature>
<feature type="strand" evidence="11">
    <location>
        <begin position="110"/>
        <end position="116"/>
    </location>
</feature>
<feature type="helix" evidence="11">
    <location>
        <begin position="119"/>
        <end position="121"/>
    </location>
</feature>
<feature type="strand" evidence="11">
    <location>
        <begin position="123"/>
        <end position="127"/>
    </location>
</feature>